<comment type="function">
    <text evidence="4">Transforms host T-cells, inducing T-cell lymphomia in the host. Activates at least SRC and LCK tyrosines kinases, thereby activating signaling pathway transforming host T-cells. Human T-cells transformed ex vivo display a IL2 indenpendent growth phenotype.</text>
</comment>
<comment type="subunit">
    <text>Homodimer. Binds SH3 domain of host LYN, HCK, LCK, SRC, FYN or YES. When tyrosine-phosphorylated, binds to the SH2 domain of host LCK, SRC, or FYN.</text>
</comment>
<comment type="interaction">
    <interactant intactId="EBI-7709835">
        <id>Q9YJQ8</id>
    </interactant>
    <interactant intactId="EBI-1348">
        <id>P06239</id>
        <label>LCK</label>
    </interactant>
    <organismsDiffer>true</organismsDiffer>
    <experiments>2</experiments>
</comment>
<comment type="subcellular location">
    <subcellularLocation>
        <location evidence="1">Host cell membrane</location>
        <topology evidence="1">Single-pass membrane protein</topology>
    </subcellularLocation>
    <text>Associated with plasma membrane, presumably via its putative transmembrane domain.</text>
</comment>
<comment type="domain">
    <text evidence="1">The SH3B/LBD1 (SH3-binding) region binds LCK SH3 domain and CSKH (C-terminal Src-related kinase homology) region binds the kinase domains of LCK. Both motif are required to activate LCK (By similarity).</text>
</comment>
<comment type="PTM">
    <text evidence="5">Phosphorylated by host LCK, SRC and less efficiently by FYN.</text>
</comment>
<organismHost>
    <name type="scientific">Ateles</name>
    <dbReference type="NCBI Taxonomy" id="9506"/>
</organismHost>
<proteinExistence type="evidence at protein level"/>
<dbReference type="EMBL" id="AF083423">
    <property type="protein sequence ID" value="AAC95349.1"/>
    <property type="molecule type" value="mRNA"/>
</dbReference>
<dbReference type="EMBL" id="AF083424">
    <property type="protein sequence ID" value="AAC95538.1"/>
    <property type="molecule type" value="Genomic_DNA"/>
</dbReference>
<dbReference type="PIR" id="T42919">
    <property type="entry name" value="T42919"/>
</dbReference>
<dbReference type="RefSeq" id="NP_047977.1">
    <property type="nucleotide sequence ID" value="NC_001987.1"/>
</dbReference>
<dbReference type="SMR" id="Q9YJQ8"/>
<dbReference type="IntAct" id="Q9YJQ8">
    <property type="interactions" value="1"/>
</dbReference>
<dbReference type="MINT" id="Q9YJQ8"/>
<dbReference type="iPTMnet" id="Q9YJQ8"/>
<dbReference type="GeneID" id="1450415"/>
<dbReference type="KEGG" id="vg:1450415"/>
<dbReference type="Proteomes" id="UP000008287">
    <property type="component" value="Genome"/>
</dbReference>
<dbReference type="GO" id="GO:0020002">
    <property type="term" value="C:host cell plasma membrane"/>
    <property type="evidence" value="ECO:0007669"/>
    <property type="project" value="UniProtKB-SubCell"/>
</dbReference>
<dbReference type="GO" id="GO:0016020">
    <property type="term" value="C:membrane"/>
    <property type="evidence" value="ECO:0007669"/>
    <property type="project" value="UniProtKB-KW"/>
</dbReference>
<reference key="1">
    <citation type="journal article" date="1999" name="J. Virol.">
        <title>Herpesvirus ateles gene product Tio interacts with nonreceptor protein tyrosine kinases.</title>
        <authorList>
            <person name="Albrecht J.-C."/>
            <person name="Friedrich U."/>
            <person name="Kardinal C."/>
            <person name="Koehn J."/>
            <person name="Fleckenstein B."/>
            <person name="Feller S.M."/>
            <person name="Biesinger B."/>
        </authorList>
    </citation>
    <scope>NUCLEOTIDE SEQUENCE [MRNA]</scope>
    <source>
        <strain>73</strain>
    </source>
</reference>
<reference key="2">
    <citation type="journal article" date="2000" name="J. Virol.">
        <title>Primary structure of the Herpesvirus ateles genome.</title>
        <authorList>
            <person name="Albrecht J.-C."/>
        </authorList>
    </citation>
    <scope>NUCLEOTIDE SEQUENCE [GENOMIC DNA]</scope>
    <source>
        <strain>73</strain>
    </source>
</reference>
<reference key="3">
    <citation type="journal article" date="2004" name="J. Virol.">
        <title>Herpesvirus ateles Tio can replace herpesvirus saimiri StpC and Tip oncoproteins in growth transformation of monkey and human T cells.</title>
        <authorList>
            <person name="Albrecht J.-C."/>
            <person name="Biesinger B."/>
            <person name="Mueller-Fleckenstein I."/>
            <person name="Lengenfelder D."/>
            <person name="Schmidt M."/>
            <person name="Fleckenstein B."/>
            <person name="Ensser A."/>
        </authorList>
    </citation>
    <scope>FUNCTION</scope>
    <source>
        <strain>73</strain>
    </source>
</reference>
<reference key="4">
    <citation type="journal article" date="2005" name="J. Virol.">
        <title>Tyrosine phosphorylation of the Tio oncoprotein is essential for transformation of primary human T cells.</title>
        <authorList>
            <person name="Albrecht J.-C."/>
            <person name="Mueller-Fleckenstein I."/>
            <person name="Schmidt M."/>
            <person name="Fleckenstein B."/>
            <person name="Biesinger B."/>
        </authorList>
    </citation>
    <scope>PHOSPHORYLATION AT TYR-136</scope>
    <scope>MUTAGENESIS OF TYR-49; TYR-136; TYR-167; TYR-171 AND 192-PRO--ARG-194</scope>
    <source>
        <strain>73</strain>
    </source>
</reference>
<sequence>MANEPQEHEEGKPFFPPLGDSGEEGPPNIPQDPTPGTPPGPINSKNEDYPPPLENPGPNKSEGPPDGSGNSSPPVTMLVKNNGDRTKQDVSESGGNNSAPNSVESKHTSSSSSAGNGNETKCPDEQNTQECITTIYIPWEDAKPKLMGLVKLDSSDSEEERSPFNKYPKNYKKLRVDMGENWPPGIPPPQLPPRPANLGQKQSATSKNGPQIILREATEVESQQATDGQLNHRVEKVEKKLTCVICLLIGILVLLILLFMLGFLFLLMK</sequence>
<organism>
    <name type="scientific">Ateline herpesvirus 3</name>
    <name type="common">AtHV-3</name>
    <name type="synonym">Herpesvirus ateles</name>
    <dbReference type="NCBI Taxonomy" id="85618"/>
    <lineage>
        <taxon>Viruses</taxon>
        <taxon>Duplodnaviria</taxon>
        <taxon>Heunggongvirae</taxon>
        <taxon>Peploviricota</taxon>
        <taxon>Herviviricetes</taxon>
        <taxon>Herpesvirales</taxon>
        <taxon>Orthoherpesviridae</taxon>
        <taxon>Gammaherpesvirinae</taxon>
        <taxon>Rhadinovirus</taxon>
        <taxon>Rhadinovirus atelinegamma3</taxon>
    </lineage>
</organism>
<accession>Q9YJQ8</accession>
<name>TIO_ATHV3</name>
<evidence type="ECO:0000250" key="1"/>
<evidence type="ECO:0000255" key="2"/>
<evidence type="ECO:0000256" key="3">
    <source>
        <dbReference type="SAM" id="MobiDB-lite"/>
    </source>
</evidence>
<evidence type="ECO:0000269" key="4">
    <source>
    </source>
</evidence>
<evidence type="ECO:0000269" key="5">
    <source>
    </source>
</evidence>
<feature type="chain" id="PRO_0000116195" description="Protein tio">
    <location>
        <begin position="1"/>
        <end position="269"/>
    </location>
</feature>
<feature type="topological domain" description="Cytoplasmic" evidence="2">
    <location>
        <begin position="1"/>
        <end position="246"/>
    </location>
</feature>
<feature type="transmembrane region" description="Helical" evidence="2">
    <location>
        <begin position="247"/>
        <end position="267"/>
    </location>
</feature>
<feature type="topological domain" description="Extracellular" evidence="2">
    <location>
        <begin position="268"/>
        <end position="269"/>
    </location>
</feature>
<feature type="region of interest" description="Disordered" evidence="3">
    <location>
        <begin position="1"/>
        <end position="127"/>
    </location>
</feature>
<feature type="region of interest" description="CSKH/LBD2" evidence="1">
    <location>
        <begin position="158"/>
        <end position="167"/>
    </location>
</feature>
<feature type="region of interest" description="SH3B/LBD1" evidence="1">
    <location>
        <begin position="186"/>
        <end position="195"/>
    </location>
</feature>
<feature type="compositionally biased region" description="Basic and acidic residues" evidence="3">
    <location>
        <begin position="1"/>
        <end position="12"/>
    </location>
</feature>
<feature type="compositionally biased region" description="Pro residues" evidence="3">
    <location>
        <begin position="27"/>
        <end position="41"/>
    </location>
</feature>
<feature type="compositionally biased region" description="Low complexity" evidence="3">
    <location>
        <begin position="61"/>
        <end position="74"/>
    </location>
</feature>
<feature type="compositionally biased region" description="Polar residues" evidence="3">
    <location>
        <begin position="91"/>
        <end position="101"/>
    </location>
</feature>
<feature type="compositionally biased region" description="Polar residues" evidence="3">
    <location>
        <begin position="114"/>
        <end position="127"/>
    </location>
</feature>
<feature type="modified residue" description="Phosphotyrosine; by host LCK" evidence="5">
    <location>
        <position position="136"/>
    </location>
</feature>
<feature type="mutagenesis site" description="No effect on tyrosine phosphorylation and viral ability to transform human T-cell." evidence="5">
    <original>Y</original>
    <variation>F</variation>
    <location>
        <position position="49"/>
    </location>
</feature>
<feature type="mutagenesis site" description="Complete loss of tyrosine phosphorylation and viral ability to transform human T-cell." evidence="5">
    <original>Y</original>
    <variation>F</variation>
    <location>
        <position position="136"/>
    </location>
</feature>
<feature type="mutagenesis site" description="No effect on tyrosine phosphorylationand viral ability to transform human T-cell." evidence="5">
    <original>Y</original>
    <variation>F</variation>
    <location>
        <position position="167"/>
    </location>
</feature>
<feature type="mutagenesis site" description="No effect on tyrosine phosphorylationand viral ability to transform human T-cell." evidence="5">
    <original>Y</original>
    <variation>F</variation>
    <location>
        <position position="171"/>
    </location>
</feature>
<feature type="mutagenesis site" description="Complete loss of tyrosine phosphorylation and viral ability to transform human T-cell." evidence="5">
    <original>PPR</original>
    <variation>ARG</variation>
    <location>
        <begin position="192"/>
        <end position="194"/>
    </location>
</feature>
<protein>
    <recommendedName>
        <fullName>Protein tio</fullName>
    </recommendedName>
</protein>
<keyword id="KW-1032">Host cell membrane</keyword>
<keyword id="KW-1043">Host membrane</keyword>
<keyword id="KW-0945">Host-virus interaction</keyword>
<keyword id="KW-0472">Membrane</keyword>
<keyword id="KW-0553">Oncogene</keyword>
<keyword id="KW-0597">Phosphoprotein</keyword>
<keyword id="KW-1185">Reference proteome</keyword>
<keyword id="KW-0812">Transmembrane</keyword>
<keyword id="KW-1133">Transmembrane helix</keyword>